<reference key="1">
    <citation type="submission" date="2008-04" db="EMBL/GenBank/DDBJ databases">
        <title>Complete sequence of Yersinia pseudotuberculosis PB1/+.</title>
        <authorList>
            <person name="Copeland A."/>
            <person name="Lucas S."/>
            <person name="Lapidus A."/>
            <person name="Glavina del Rio T."/>
            <person name="Dalin E."/>
            <person name="Tice H."/>
            <person name="Bruce D."/>
            <person name="Goodwin L."/>
            <person name="Pitluck S."/>
            <person name="Munk A.C."/>
            <person name="Brettin T."/>
            <person name="Detter J.C."/>
            <person name="Han C."/>
            <person name="Tapia R."/>
            <person name="Schmutz J."/>
            <person name="Larimer F."/>
            <person name="Land M."/>
            <person name="Hauser L."/>
            <person name="Challacombe J.F."/>
            <person name="Green L."/>
            <person name="Lindler L.E."/>
            <person name="Nikolich M.P."/>
            <person name="Richardson P."/>
        </authorList>
    </citation>
    <scope>NUCLEOTIDE SEQUENCE [LARGE SCALE GENOMIC DNA]</scope>
    <source>
        <strain>PB1/+</strain>
    </source>
</reference>
<dbReference type="EMBL" id="CP001048">
    <property type="protein sequence ID" value="ACC89062.1"/>
    <property type="molecule type" value="Genomic_DNA"/>
</dbReference>
<dbReference type="RefSeq" id="WP_002211199.1">
    <property type="nucleotide sequence ID" value="NZ_CP009780.1"/>
</dbReference>
<dbReference type="SMR" id="B2K323"/>
<dbReference type="GeneID" id="57976604"/>
<dbReference type="KEGG" id="ypb:YPTS_2099"/>
<dbReference type="PATRIC" id="fig|502801.10.peg.1490"/>
<dbReference type="GO" id="GO:0005737">
    <property type="term" value="C:cytoplasm"/>
    <property type="evidence" value="ECO:0007669"/>
    <property type="project" value="UniProtKB-SubCell"/>
</dbReference>
<dbReference type="GO" id="GO:0009379">
    <property type="term" value="C:Holliday junction helicase complex"/>
    <property type="evidence" value="ECO:0007669"/>
    <property type="project" value="InterPro"/>
</dbReference>
<dbReference type="GO" id="GO:0048476">
    <property type="term" value="C:Holliday junction resolvase complex"/>
    <property type="evidence" value="ECO:0007669"/>
    <property type="project" value="UniProtKB-UniRule"/>
</dbReference>
<dbReference type="GO" id="GO:0005524">
    <property type="term" value="F:ATP binding"/>
    <property type="evidence" value="ECO:0007669"/>
    <property type="project" value="InterPro"/>
</dbReference>
<dbReference type="GO" id="GO:0000400">
    <property type="term" value="F:four-way junction DNA binding"/>
    <property type="evidence" value="ECO:0007669"/>
    <property type="project" value="UniProtKB-UniRule"/>
</dbReference>
<dbReference type="GO" id="GO:0009378">
    <property type="term" value="F:four-way junction helicase activity"/>
    <property type="evidence" value="ECO:0007669"/>
    <property type="project" value="InterPro"/>
</dbReference>
<dbReference type="GO" id="GO:0006310">
    <property type="term" value="P:DNA recombination"/>
    <property type="evidence" value="ECO:0007669"/>
    <property type="project" value="UniProtKB-UniRule"/>
</dbReference>
<dbReference type="GO" id="GO:0006281">
    <property type="term" value="P:DNA repair"/>
    <property type="evidence" value="ECO:0007669"/>
    <property type="project" value="UniProtKB-UniRule"/>
</dbReference>
<dbReference type="CDD" id="cd14332">
    <property type="entry name" value="UBA_RuvA_C"/>
    <property type="match status" value="1"/>
</dbReference>
<dbReference type="FunFam" id="1.10.150.20:FF:000012">
    <property type="entry name" value="Holliday junction ATP-dependent DNA helicase RuvA"/>
    <property type="match status" value="1"/>
</dbReference>
<dbReference type="FunFam" id="2.40.50.140:FF:000083">
    <property type="entry name" value="Holliday junction ATP-dependent DNA helicase RuvA"/>
    <property type="match status" value="1"/>
</dbReference>
<dbReference type="Gene3D" id="1.10.150.20">
    <property type="entry name" value="5' to 3' exonuclease, C-terminal subdomain"/>
    <property type="match status" value="1"/>
</dbReference>
<dbReference type="Gene3D" id="1.10.8.10">
    <property type="entry name" value="DNA helicase RuvA subunit, C-terminal domain"/>
    <property type="match status" value="1"/>
</dbReference>
<dbReference type="Gene3D" id="2.40.50.140">
    <property type="entry name" value="Nucleic acid-binding proteins"/>
    <property type="match status" value="1"/>
</dbReference>
<dbReference type="HAMAP" id="MF_00031">
    <property type="entry name" value="DNA_HJ_migration_RuvA"/>
    <property type="match status" value="1"/>
</dbReference>
<dbReference type="InterPro" id="IPR013849">
    <property type="entry name" value="DNA_helicase_Holl-junc_RuvA_I"/>
</dbReference>
<dbReference type="InterPro" id="IPR003583">
    <property type="entry name" value="Hlx-hairpin-Hlx_DNA-bd_motif"/>
</dbReference>
<dbReference type="InterPro" id="IPR012340">
    <property type="entry name" value="NA-bd_OB-fold"/>
</dbReference>
<dbReference type="InterPro" id="IPR000085">
    <property type="entry name" value="RuvA"/>
</dbReference>
<dbReference type="InterPro" id="IPR010994">
    <property type="entry name" value="RuvA_2-like"/>
</dbReference>
<dbReference type="InterPro" id="IPR011114">
    <property type="entry name" value="RuvA_C"/>
</dbReference>
<dbReference type="InterPro" id="IPR036267">
    <property type="entry name" value="RuvA_C_sf"/>
</dbReference>
<dbReference type="NCBIfam" id="TIGR00084">
    <property type="entry name" value="ruvA"/>
    <property type="match status" value="1"/>
</dbReference>
<dbReference type="Pfam" id="PF14520">
    <property type="entry name" value="HHH_5"/>
    <property type="match status" value="1"/>
</dbReference>
<dbReference type="Pfam" id="PF07499">
    <property type="entry name" value="RuvA_C"/>
    <property type="match status" value="1"/>
</dbReference>
<dbReference type="Pfam" id="PF01330">
    <property type="entry name" value="RuvA_N"/>
    <property type="match status" value="1"/>
</dbReference>
<dbReference type="SMART" id="SM00278">
    <property type="entry name" value="HhH1"/>
    <property type="match status" value="2"/>
</dbReference>
<dbReference type="SUPFAM" id="SSF46929">
    <property type="entry name" value="DNA helicase RuvA subunit, C-terminal domain"/>
    <property type="match status" value="1"/>
</dbReference>
<dbReference type="SUPFAM" id="SSF50249">
    <property type="entry name" value="Nucleic acid-binding proteins"/>
    <property type="match status" value="1"/>
</dbReference>
<dbReference type="SUPFAM" id="SSF47781">
    <property type="entry name" value="RuvA domain 2-like"/>
    <property type="match status" value="1"/>
</dbReference>
<gene>
    <name evidence="1" type="primary">ruvA</name>
    <name type="ordered locus">YPTS_2099</name>
</gene>
<name>RUVA_YERPB</name>
<keyword id="KW-0963">Cytoplasm</keyword>
<keyword id="KW-0227">DNA damage</keyword>
<keyword id="KW-0233">DNA recombination</keyword>
<keyword id="KW-0234">DNA repair</keyword>
<keyword id="KW-0238">DNA-binding</keyword>
<sequence length="204" mass="22188">MIGRLRGIILEKQPPLVLLETNGVGYEVQLPMTCFYELPELGQEAIIFTQFVVREDAQLLYGFNNKQERALFRELIKVNGVGPKLALAILSGMSAQQFVGAVEREDITTLVKLPGVGKKTAERLVVEMKDRFKGLNGDLFNNTGDISLPTASPQTSDADIEAEAASALVALGYKPQEASRLVSKIAKPGADCETLIRDALRAAL</sequence>
<evidence type="ECO:0000255" key="1">
    <source>
        <dbReference type="HAMAP-Rule" id="MF_00031"/>
    </source>
</evidence>
<accession>B2K323</accession>
<feature type="chain" id="PRO_1000090390" description="Holliday junction branch migration complex subunit RuvA">
    <location>
        <begin position="1"/>
        <end position="204"/>
    </location>
</feature>
<feature type="region of interest" description="Domain I" evidence="1">
    <location>
        <begin position="1"/>
        <end position="64"/>
    </location>
</feature>
<feature type="region of interest" description="Domain II" evidence="1">
    <location>
        <begin position="65"/>
        <end position="142"/>
    </location>
</feature>
<feature type="region of interest" description="Flexible linker" evidence="1">
    <location>
        <begin position="143"/>
        <end position="155"/>
    </location>
</feature>
<feature type="region of interest" description="Domain III" evidence="1">
    <location>
        <begin position="156"/>
        <end position="204"/>
    </location>
</feature>
<protein>
    <recommendedName>
        <fullName evidence="1">Holliday junction branch migration complex subunit RuvA</fullName>
    </recommendedName>
</protein>
<comment type="function">
    <text evidence="1">The RuvA-RuvB-RuvC complex processes Holliday junction (HJ) DNA during genetic recombination and DNA repair, while the RuvA-RuvB complex plays an important role in the rescue of blocked DNA replication forks via replication fork reversal (RFR). RuvA specifically binds to HJ cruciform DNA, conferring on it an open structure. The RuvB hexamer acts as an ATP-dependent pump, pulling dsDNA into and through the RuvAB complex. HJ branch migration allows RuvC to scan DNA until it finds its consensus sequence, where it cleaves and resolves the cruciform DNA.</text>
</comment>
<comment type="subunit">
    <text evidence="1">Homotetramer. Forms an RuvA(8)-RuvB(12)-Holliday junction (HJ) complex. HJ DNA is sandwiched between 2 RuvA tetramers; dsDNA enters through RuvA and exits via RuvB. An RuvB hexamer assembles on each DNA strand where it exits the tetramer. Each RuvB hexamer is contacted by two RuvA subunits (via domain III) on 2 adjacent RuvB subunits; this complex drives branch migration. In the full resolvosome a probable DNA-RuvA(4)-RuvB(12)-RuvC(2) complex forms which resolves the HJ.</text>
</comment>
<comment type="subcellular location">
    <subcellularLocation>
        <location evidence="1">Cytoplasm</location>
    </subcellularLocation>
</comment>
<comment type="domain">
    <text evidence="1">Has three domains with a flexible linker between the domains II and III and assumes an 'L' shape. Domain III is highly mobile and contacts RuvB.</text>
</comment>
<comment type="similarity">
    <text evidence="1">Belongs to the RuvA family.</text>
</comment>
<proteinExistence type="inferred from homology"/>
<organism>
    <name type="scientific">Yersinia pseudotuberculosis serotype IB (strain PB1/+)</name>
    <dbReference type="NCBI Taxonomy" id="502801"/>
    <lineage>
        <taxon>Bacteria</taxon>
        <taxon>Pseudomonadati</taxon>
        <taxon>Pseudomonadota</taxon>
        <taxon>Gammaproteobacteria</taxon>
        <taxon>Enterobacterales</taxon>
        <taxon>Yersiniaceae</taxon>
        <taxon>Yersinia</taxon>
    </lineage>
</organism>